<sequence length="98" mass="10689">MKINQPAVAGTLESGDVMIRIAPLDTQDIDLQINSSVEKQFGDAIRTTILDVLARYNVRGVQLNVDDKGALDCILRARLEALLARASGIPALPWEDCQ</sequence>
<organism>
    <name type="scientific">Escherichia coli O7:K1 (strain IAI39 / ExPEC)</name>
    <dbReference type="NCBI Taxonomy" id="585057"/>
    <lineage>
        <taxon>Bacteria</taxon>
        <taxon>Pseudomonadati</taxon>
        <taxon>Pseudomonadota</taxon>
        <taxon>Gammaproteobacteria</taxon>
        <taxon>Enterobacterales</taxon>
        <taxon>Enterobacteriaceae</taxon>
        <taxon>Escherichia</taxon>
    </lineage>
</organism>
<accession>B7NLX7</accession>
<keyword id="KW-0963">Cytoplasm</keyword>
<keyword id="KW-0597">Phosphoprotein</keyword>
<dbReference type="EMBL" id="CU928164">
    <property type="protein sequence ID" value="CAR16730.1"/>
    <property type="molecule type" value="Genomic_DNA"/>
</dbReference>
<dbReference type="RefSeq" id="WP_000700703.1">
    <property type="nucleotide sequence ID" value="NC_011750.1"/>
</dbReference>
<dbReference type="RefSeq" id="YP_002406619.1">
    <property type="nucleotide sequence ID" value="NC_011750.1"/>
</dbReference>
<dbReference type="SMR" id="B7NLX7"/>
<dbReference type="STRING" id="585057.ECIAI39_0593"/>
<dbReference type="GeneID" id="93776868"/>
<dbReference type="KEGG" id="ect:ECIAI39_0593"/>
<dbReference type="PATRIC" id="fig|585057.6.peg.630"/>
<dbReference type="HOGENOM" id="CLU_158489_0_0_6"/>
<dbReference type="Proteomes" id="UP000000749">
    <property type="component" value="Chromosome"/>
</dbReference>
<dbReference type="GO" id="GO:0005737">
    <property type="term" value="C:cytoplasm"/>
    <property type="evidence" value="ECO:0007669"/>
    <property type="project" value="UniProtKB-SubCell"/>
</dbReference>
<dbReference type="HAMAP" id="MF_00805">
    <property type="entry name" value="CitD"/>
    <property type="match status" value="1"/>
</dbReference>
<dbReference type="InterPro" id="IPR006495">
    <property type="entry name" value="CitD"/>
</dbReference>
<dbReference type="InterPro" id="IPR023439">
    <property type="entry name" value="Mal_deCO2ase/Cit_lyase_ACP"/>
</dbReference>
<dbReference type="NCBIfam" id="TIGR01608">
    <property type="entry name" value="citD"/>
    <property type="match status" value="1"/>
</dbReference>
<dbReference type="NCBIfam" id="NF009726">
    <property type="entry name" value="PRK13253.1"/>
    <property type="match status" value="1"/>
</dbReference>
<dbReference type="Pfam" id="PF06857">
    <property type="entry name" value="ACP"/>
    <property type="match status" value="1"/>
</dbReference>
<dbReference type="PIRSF" id="PIRSF002736">
    <property type="entry name" value="Citrt_lyas_gamma"/>
    <property type="match status" value="1"/>
</dbReference>
<comment type="function">
    <text evidence="1">Covalent carrier of the coenzyme of citrate lyase.</text>
</comment>
<comment type="subunit">
    <text evidence="1">Oligomer with a subunit composition of (alpha,beta,gamma)6.</text>
</comment>
<comment type="subcellular location">
    <subcellularLocation>
        <location evidence="1">Cytoplasm</location>
    </subcellularLocation>
</comment>
<comment type="similarity">
    <text evidence="1">Belongs to the CitD family.</text>
</comment>
<reference key="1">
    <citation type="journal article" date="2009" name="PLoS Genet.">
        <title>Organised genome dynamics in the Escherichia coli species results in highly diverse adaptive paths.</title>
        <authorList>
            <person name="Touchon M."/>
            <person name="Hoede C."/>
            <person name="Tenaillon O."/>
            <person name="Barbe V."/>
            <person name="Baeriswyl S."/>
            <person name="Bidet P."/>
            <person name="Bingen E."/>
            <person name="Bonacorsi S."/>
            <person name="Bouchier C."/>
            <person name="Bouvet O."/>
            <person name="Calteau A."/>
            <person name="Chiapello H."/>
            <person name="Clermont O."/>
            <person name="Cruveiller S."/>
            <person name="Danchin A."/>
            <person name="Diard M."/>
            <person name="Dossat C."/>
            <person name="Karoui M.E."/>
            <person name="Frapy E."/>
            <person name="Garry L."/>
            <person name="Ghigo J.M."/>
            <person name="Gilles A.M."/>
            <person name="Johnson J."/>
            <person name="Le Bouguenec C."/>
            <person name="Lescat M."/>
            <person name="Mangenot S."/>
            <person name="Martinez-Jehanne V."/>
            <person name="Matic I."/>
            <person name="Nassif X."/>
            <person name="Oztas S."/>
            <person name="Petit M.A."/>
            <person name="Pichon C."/>
            <person name="Rouy Z."/>
            <person name="Ruf C.S."/>
            <person name="Schneider D."/>
            <person name="Tourret J."/>
            <person name="Vacherie B."/>
            <person name="Vallenet D."/>
            <person name="Medigue C."/>
            <person name="Rocha E.P.C."/>
            <person name="Denamur E."/>
        </authorList>
    </citation>
    <scope>NUCLEOTIDE SEQUENCE [LARGE SCALE GENOMIC DNA]</scope>
    <source>
        <strain>IAI39 / ExPEC</strain>
    </source>
</reference>
<feature type="chain" id="PRO_1000133966" description="Citrate lyase acyl carrier protein">
    <location>
        <begin position="1"/>
        <end position="98"/>
    </location>
</feature>
<feature type="modified residue" description="O-(phosphoribosyl dephospho-coenzyme A)serine" evidence="1">
    <location>
        <position position="14"/>
    </location>
</feature>
<name>CITD_ECO7I</name>
<proteinExistence type="inferred from homology"/>
<gene>
    <name evidence="1" type="primary">citD</name>
    <name type="ordered locus">ECIAI39_0593</name>
</gene>
<evidence type="ECO:0000255" key="1">
    <source>
        <dbReference type="HAMAP-Rule" id="MF_00805"/>
    </source>
</evidence>
<protein>
    <recommendedName>
        <fullName evidence="1">Citrate lyase acyl carrier protein</fullName>
    </recommendedName>
    <alternativeName>
        <fullName evidence="1">Citrate lyase gamma chain</fullName>
    </alternativeName>
</protein>